<proteinExistence type="inferred from homology"/>
<feature type="chain" id="PRO_0000064410" description="Aminoglycoside 2'-N-acetyltransferase">
    <location>
        <begin position="1"/>
        <end position="195"/>
    </location>
</feature>
<feature type="domain" description="N-acetyltransferase" evidence="2">
    <location>
        <begin position="21"/>
        <end position="180"/>
    </location>
</feature>
<feature type="binding site" evidence="1">
    <location>
        <position position="45"/>
    </location>
    <ligand>
        <name>substrate</name>
    </ligand>
</feature>
<feature type="binding site" evidence="1">
    <location>
        <begin position="92"/>
        <end position="93"/>
    </location>
    <ligand>
        <name>substrate</name>
    </ligand>
</feature>
<feature type="binding site" evidence="1">
    <location>
        <begin position="94"/>
        <end position="96"/>
    </location>
    <ligand>
        <name>CoA</name>
        <dbReference type="ChEBI" id="CHEBI:57287"/>
    </ligand>
</feature>
<feature type="binding site" evidence="1">
    <location>
        <begin position="101"/>
        <end position="106"/>
    </location>
    <ligand>
        <name>CoA</name>
        <dbReference type="ChEBI" id="CHEBI:57287"/>
    </ligand>
</feature>
<feature type="binding site" evidence="1">
    <location>
        <position position="127"/>
    </location>
    <ligand>
        <name>substrate</name>
    </ligand>
</feature>
<feature type="binding site" evidence="1">
    <location>
        <begin position="161"/>
        <end position="162"/>
    </location>
    <ligand>
        <name>substrate</name>
    </ligand>
</feature>
<protein>
    <recommendedName>
        <fullName>Aminoglycoside 2'-N-acetyltransferase</fullName>
        <ecNumber>2.3.1.-</ecNumber>
    </recommendedName>
    <alternativeName>
        <fullName>AAC(2')-Ib</fullName>
    </alternativeName>
</protein>
<gene>
    <name type="primary">aac</name>
</gene>
<organism>
    <name type="scientific">Mycolicibacterium fortuitum</name>
    <name type="common">Mycobacterium fortuitum</name>
    <dbReference type="NCBI Taxonomy" id="1766"/>
    <lineage>
        <taxon>Bacteria</taxon>
        <taxon>Bacillati</taxon>
        <taxon>Actinomycetota</taxon>
        <taxon>Actinomycetes</taxon>
        <taxon>Mycobacteriales</taxon>
        <taxon>Mycobacteriaceae</taxon>
        <taxon>Mycolicibacterium</taxon>
    </lineage>
</organism>
<comment type="function">
    <text>Confers resistance to gentamicin, tobramycin, dibekacin, netilmicin, and 6'-N-ethylnetilmicin.</text>
</comment>
<comment type="subunit">
    <text evidence="3">Homodimer.</text>
</comment>
<comment type="similarity">
    <text evidence="3">Belongs to the AAC(2')-I acetyltransferase family.</text>
</comment>
<reference key="1">
    <citation type="journal article" date="1996" name="Antimicrob. Agents Chemother.">
        <title>Characterization of the chromosomal aminoglycoside 2'-N-acetyltransferase gene from Mycobacterium fortuitum.</title>
        <authorList>
            <person name="Ainsa J.A."/>
            <person name="Martin C."/>
            <person name="Gicquel B."/>
            <person name="Gomez-Lus R."/>
        </authorList>
    </citation>
    <scope>NUCLEOTIDE SEQUENCE [GENOMIC DNA]</scope>
    <source>
        <strain>FC1K</strain>
    </source>
</reference>
<dbReference type="EC" id="2.3.1.-"/>
<dbReference type="EMBL" id="U41471">
    <property type="protein sequence ID" value="AAC44793.1"/>
    <property type="molecule type" value="Genomic_DNA"/>
</dbReference>
<dbReference type="SMR" id="Q49157"/>
<dbReference type="STRING" id="1766.XA26_03650"/>
<dbReference type="CARD" id="ARO:3002524">
    <property type="molecule name" value="AAC(2')-Ib"/>
    <property type="mechanism identifier" value="ARO:0001004"/>
    <property type="mechanism name" value="antibiotic inactivation"/>
</dbReference>
<dbReference type="KEGG" id="ag:AAC44793"/>
<dbReference type="OrthoDB" id="70281at2"/>
<dbReference type="GO" id="GO:0016747">
    <property type="term" value="F:acyltransferase activity, transferring groups other than amino-acyl groups"/>
    <property type="evidence" value="ECO:0007669"/>
    <property type="project" value="InterPro"/>
</dbReference>
<dbReference type="GO" id="GO:0046677">
    <property type="term" value="P:response to antibiotic"/>
    <property type="evidence" value="ECO:0007669"/>
    <property type="project" value="UniProtKB-KW"/>
</dbReference>
<dbReference type="CDD" id="cd04301">
    <property type="entry name" value="NAT_SF"/>
    <property type="match status" value="1"/>
</dbReference>
<dbReference type="Gene3D" id="3.40.630.30">
    <property type="match status" value="1"/>
</dbReference>
<dbReference type="InterPro" id="IPR016181">
    <property type="entry name" value="Acyl_CoA_acyltransferase"/>
</dbReference>
<dbReference type="InterPro" id="IPR000182">
    <property type="entry name" value="GNAT_dom"/>
</dbReference>
<dbReference type="NCBIfam" id="NF000010">
    <property type="entry name" value="AAC_2p_Ib"/>
    <property type="match status" value="1"/>
</dbReference>
<dbReference type="Pfam" id="PF00583">
    <property type="entry name" value="Acetyltransf_1"/>
    <property type="match status" value="1"/>
</dbReference>
<dbReference type="SUPFAM" id="SSF55729">
    <property type="entry name" value="Acyl-CoA N-acyltransferases (Nat)"/>
    <property type="match status" value="1"/>
</dbReference>
<dbReference type="PROSITE" id="PS51186">
    <property type="entry name" value="GNAT"/>
    <property type="match status" value="1"/>
</dbReference>
<keyword id="KW-0012">Acyltransferase</keyword>
<keyword id="KW-0046">Antibiotic resistance</keyword>
<keyword id="KW-0808">Transferase</keyword>
<accession>Q49157</accession>
<sequence>MPFQDVSAPVRGGILHTARLVHTSDLDQETREGARRMVIEAFEGDFSDADWEHALGGMHAFICHHGALIAHAAVVQRRLLYRDTALRCGYVEAVAVREDWRGQGLATAVMDAVEQVLRGAYQLGALSASDTARGMYLSRGWLPWQGPTSVLQPAGVTRTPEDDEGLFVLPVGLPAGMELDTTAEITCDWRDGDVW</sequence>
<evidence type="ECO:0000250" key="1">
    <source>
        <dbReference type="UniProtKB" id="P9WQG9"/>
    </source>
</evidence>
<evidence type="ECO:0000255" key="2">
    <source>
        <dbReference type="PROSITE-ProRule" id="PRU00532"/>
    </source>
</evidence>
<evidence type="ECO:0000305" key="3"/>
<name>AAC2_MYCFO</name>